<accession>Q4JBW3</accession>
<feature type="chain" id="PRO_0000135003" description="Nicotinamide-nucleotide adenylyltransferase 1">
    <location>
        <begin position="1"/>
        <end position="175"/>
    </location>
</feature>
<evidence type="ECO:0000255" key="1">
    <source>
        <dbReference type="HAMAP-Rule" id="MF_00243"/>
    </source>
</evidence>
<protein>
    <recommendedName>
        <fullName evidence="1">Nicotinamide-nucleotide adenylyltransferase 1</fullName>
        <ecNumber evidence="1">2.7.7.1</ecNumber>
    </recommendedName>
    <alternativeName>
        <fullName evidence="1">NAD(+) diphosphorylase 1</fullName>
    </alternativeName>
    <alternativeName>
        <fullName evidence="1">NAD(+) pyrophosphorylase 1</fullName>
    </alternativeName>
    <alternativeName>
        <fullName evidence="1">NMN adenylyltransferase 1</fullName>
    </alternativeName>
</protein>
<proteinExistence type="inferred from homology"/>
<name>NADM1_SULAC</name>
<comment type="catalytic activity">
    <reaction evidence="1">
        <text>beta-nicotinamide D-ribonucleotide + ATP + H(+) = diphosphate + NAD(+)</text>
        <dbReference type="Rhea" id="RHEA:21360"/>
        <dbReference type="ChEBI" id="CHEBI:14649"/>
        <dbReference type="ChEBI" id="CHEBI:15378"/>
        <dbReference type="ChEBI" id="CHEBI:30616"/>
        <dbReference type="ChEBI" id="CHEBI:33019"/>
        <dbReference type="ChEBI" id="CHEBI:57540"/>
        <dbReference type="EC" id="2.7.7.1"/>
    </reaction>
</comment>
<comment type="pathway">
    <text evidence="1">Cofactor biosynthesis; NAD(+) biosynthesis; NAD(+) from nicotinamide D-ribonucleotide: step 1/1.</text>
</comment>
<comment type="subcellular location">
    <subcellularLocation>
        <location evidence="1">Cytoplasm</location>
    </subcellularLocation>
</comment>
<comment type="similarity">
    <text evidence="1">Belongs to the archaeal NMN adenylyltransferase family.</text>
</comment>
<keyword id="KW-0067">ATP-binding</keyword>
<keyword id="KW-0963">Cytoplasm</keyword>
<keyword id="KW-0520">NAD</keyword>
<keyword id="KW-0547">Nucleotide-binding</keyword>
<keyword id="KW-0548">Nucleotidyltransferase</keyword>
<keyword id="KW-0662">Pyridine nucleotide biosynthesis</keyword>
<keyword id="KW-1185">Reference proteome</keyword>
<keyword id="KW-0808">Transferase</keyword>
<dbReference type="EC" id="2.7.7.1" evidence="1"/>
<dbReference type="EMBL" id="CP000077">
    <property type="protein sequence ID" value="AAY79716.1"/>
    <property type="molecule type" value="Genomic_DNA"/>
</dbReference>
<dbReference type="RefSeq" id="WP_011277218.1">
    <property type="nucleotide sequence ID" value="NC_007181.1"/>
</dbReference>
<dbReference type="SMR" id="Q4JBW3"/>
<dbReference type="STRING" id="330779.Saci_0300"/>
<dbReference type="GeneID" id="14550830"/>
<dbReference type="KEGG" id="sai:Saci_0300"/>
<dbReference type="PATRIC" id="fig|330779.12.peg.296"/>
<dbReference type="eggNOG" id="arCOG00972">
    <property type="taxonomic scope" value="Archaea"/>
</dbReference>
<dbReference type="HOGENOM" id="CLU_108783_0_0_2"/>
<dbReference type="UniPathway" id="UPA00253">
    <property type="reaction ID" value="UER00600"/>
</dbReference>
<dbReference type="Proteomes" id="UP000001018">
    <property type="component" value="Chromosome"/>
</dbReference>
<dbReference type="GO" id="GO:0005737">
    <property type="term" value="C:cytoplasm"/>
    <property type="evidence" value="ECO:0007669"/>
    <property type="project" value="UniProtKB-SubCell"/>
</dbReference>
<dbReference type="GO" id="GO:0005524">
    <property type="term" value="F:ATP binding"/>
    <property type="evidence" value="ECO:0007669"/>
    <property type="project" value="UniProtKB-KW"/>
</dbReference>
<dbReference type="GO" id="GO:0000309">
    <property type="term" value="F:nicotinamide-nucleotide adenylyltransferase activity"/>
    <property type="evidence" value="ECO:0007669"/>
    <property type="project" value="UniProtKB-UniRule"/>
</dbReference>
<dbReference type="GO" id="GO:0009435">
    <property type="term" value="P:NAD biosynthetic process"/>
    <property type="evidence" value="ECO:0007669"/>
    <property type="project" value="UniProtKB-UniRule"/>
</dbReference>
<dbReference type="CDD" id="cd02166">
    <property type="entry name" value="NMNAT_Archaea"/>
    <property type="match status" value="1"/>
</dbReference>
<dbReference type="Gene3D" id="3.40.50.620">
    <property type="entry name" value="HUPs"/>
    <property type="match status" value="1"/>
</dbReference>
<dbReference type="HAMAP" id="MF_00243">
    <property type="entry name" value="NMN_adenylyltr"/>
    <property type="match status" value="1"/>
</dbReference>
<dbReference type="InterPro" id="IPR004821">
    <property type="entry name" value="Cyt_trans-like"/>
</dbReference>
<dbReference type="InterPro" id="IPR006418">
    <property type="entry name" value="NMN_Atrans_arc"/>
</dbReference>
<dbReference type="InterPro" id="IPR014729">
    <property type="entry name" value="Rossmann-like_a/b/a_fold"/>
</dbReference>
<dbReference type="NCBIfam" id="TIGR01527">
    <property type="entry name" value="arch_NMN_Atrans"/>
    <property type="match status" value="1"/>
</dbReference>
<dbReference type="NCBIfam" id="TIGR00125">
    <property type="entry name" value="cyt_tran_rel"/>
    <property type="match status" value="1"/>
</dbReference>
<dbReference type="NCBIfam" id="NF002243">
    <property type="entry name" value="PRK01153.1"/>
    <property type="match status" value="1"/>
</dbReference>
<dbReference type="PANTHER" id="PTHR21342:SF0">
    <property type="entry name" value="BIFUNCTIONAL NMN ADENYLYLTRANSFERASE_NUDIX HYDROLASE"/>
    <property type="match status" value="1"/>
</dbReference>
<dbReference type="PANTHER" id="PTHR21342">
    <property type="entry name" value="PHOSPHOPANTETHEINE ADENYLYLTRANSFERASE"/>
    <property type="match status" value="1"/>
</dbReference>
<dbReference type="Pfam" id="PF01467">
    <property type="entry name" value="CTP_transf_like"/>
    <property type="match status" value="1"/>
</dbReference>
<dbReference type="SUPFAM" id="SSF52374">
    <property type="entry name" value="Nucleotidylyl transferase"/>
    <property type="match status" value="1"/>
</dbReference>
<organism>
    <name type="scientific">Sulfolobus acidocaldarius (strain ATCC 33909 / DSM 639 / JCM 8929 / NBRC 15157 / NCIMB 11770)</name>
    <dbReference type="NCBI Taxonomy" id="330779"/>
    <lineage>
        <taxon>Archaea</taxon>
        <taxon>Thermoproteota</taxon>
        <taxon>Thermoprotei</taxon>
        <taxon>Sulfolobales</taxon>
        <taxon>Sulfolobaceae</taxon>
        <taxon>Sulfolobus</taxon>
    </lineage>
</organism>
<reference key="1">
    <citation type="journal article" date="2005" name="J. Bacteriol.">
        <title>The genome of Sulfolobus acidocaldarius, a model organism of the Crenarchaeota.</title>
        <authorList>
            <person name="Chen L."/>
            <person name="Bruegger K."/>
            <person name="Skovgaard M."/>
            <person name="Redder P."/>
            <person name="She Q."/>
            <person name="Torarinsson E."/>
            <person name="Greve B."/>
            <person name="Awayez M."/>
            <person name="Zibat A."/>
            <person name="Klenk H.-P."/>
            <person name="Garrett R.A."/>
        </authorList>
    </citation>
    <scope>NUCLEOTIDE SEQUENCE [LARGE SCALE GENOMIC DNA]</scope>
    <source>
        <strain>ATCC 33909 / DSM 639 / JCM 8929 / NBRC 15157 / NCIMB 11770</strain>
    </source>
</reference>
<sequence>MRALFPGRFQPFHLGHLQVVKWLLDRYEELIIMIGSGQESHSPYNPFTAGERLVMVKESLAETGIDLRKVVIFPVMESFTSKNWIRIVEMYSPHFDVIISGNPLVYTVAKEAGYMVERVPMFNRDIYNATRIRKLIMENDLKWMECVPKSVSQFIRDIKGDERIRDVTKNDYTED</sequence>
<gene>
    <name type="ordered locus">Saci_0300</name>
</gene>